<gene>
    <name evidence="1" type="primary">rplX</name>
    <name evidence="1" type="synonym">rpl24</name>
    <name type="ordered locus">SynRCC307_2127</name>
</gene>
<accession>A5GVX1</accession>
<protein>
    <recommendedName>
        <fullName evidence="1">Large ribosomal subunit protein uL24</fullName>
    </recommendedName>
    <alternativeName>
        <fullName evidence="2">50S ribosomal protein L24</fullName>
    </alternativeName>
</protein>
<keyword id="KW-1185">Reference proteome</keyword>
<keyword id="KW-0687">Ribonucleoprotein</keyword>
<keyword id="KW-0689">Ribosomal protein</keyword>
<keyword id="KW-0694">RNA-binding</keyword>
<keyword id="KW-0699">rRNA-binding</keyword>
<proteinExistence type="inferred from homology"/>
<organism>
    <name type="scientific">Synechococcus sp. (strain RCC307)</name>
    <dbReference type="NCBI Taxonomy" id="316278"/>
    <lineage>
        <taxon>Bacteria</taxon>
        <taxon>Bacillati</taxon>
        <taxon>Cyanobacteriota</taxon>
        <taxon>Cyanophyceae</taxon>
        <taxon>Synechococcales</taxon>
        <taxon>Synechococcaceae</taxon>
        <taxon>Synechococcus</taxon>
    </lineage>
</organism>
<evidence type="ECO:0000255" key="1">
    <source>
        <dbReference type="HAMAP-Rule" id="MF_01326"/>
    </source>
</evidence>
<evidence type="ECO:0000305" key="2"/>
<sequence length="113" mass="12523">MATASPTRTKMRIRKGDTVQVIAGKDKGKTGEVLRTLPWENRVVVQGVNLRTRHVKPAQEGESGRIVTEEASLHASNVMVYSTDKKVASRVEIVVDKDGNKKRKLKKTGELLD</sequence>
<name>RL24_SYNR3</name>
<comment type="function">
    <text evidence="1">One of two assembly initiator proteins, it binds directly to the 5'-end of the 23S rRNA, where it nucleates assembly of the 50S subunit.</text>
</comment>
<comment type="function">
    <text evidence="1">One of the proteins that surrounds the polypeptide exit tunnel on the outside of the subunit.</text>
</comment>
<comment type="subunit">
    <text evidence="1">Part of the 50S ribosomal subunit.</text>
</comment>
<comment type="similarity">
    <text evidence="1">Belongs to the universal ribosomal protein uL24 family.</text>
</comment>
<dbReference type="EMBL" id="CT978603">
    <property type="protein sequence ID" value="CAK29030.1"/>
    <property type="molecule type" value="Genomic_DNA"/>
</dbReference>
<dbReference type="SMR" id="A5GVX1"/>
<dbReference type="STRING" id="316278.SynRCC307_2127"/>
<dbReference type="KEGG" id="syr:SynRCC307_2127"/>
<dbReference type="eggNOG" id="COG0198">
    <property type="taxonomic scope" value="Bacteria"/>
</dbReference>
<dbReference type="HOGENOM" id="CLU_093315_2_3_3"/>
<dbReference type="OrthoDB" id="9807419at2"/>
<dbReference type="Proteomes" id="UP000001115">
    <property type="component" value="Chromosome"/>
</dbReference>
<dbReference type="GO" id="GO:1990904">
    <property type="term" value="C:ribonucleoprotein complex"/>
    <property type="evidence" value="ECO:0007669"/>
    <property type="project" value="UniProtKB-KW"/>
</dbReference>
<dbReference type="GO" id="GO:0005840">
    <property type="term" value="C:ribosome"/>
    <property type="evidence" value="ECO:0007669"/>
    <property type="project" value="UniProtKB-KW"/>
</dbReference>
<dbReference type="GO" id="GO:0019843">
    <property type="term" value="F:rRNA binding"/>
    <property type="evidence" value="ECO:0007669"/>
    <property type="project" value="UniProtKB-UniRule"/>
</dbReference>
<dbReference type="GO" id="GO:0003735">
    <property type="term" value="F:structural constituent of ribosome"/>
    <property type="evidence" value="ECO:0007669"/>
    <property type="project" value="InterPro"/>
</dbReference>
<dbReference type="GO" id="GO:0006412">
    <property type="term" value="P:translation"/>
    <property type="evidence" value="ECO:0007669"/>
    <property type="project" value="UniProtKB-UniRule"/>
</dbReference>
<dbReference type="CDD" id="cd06089">
    <property type="entry name" value="KOW_RPL26"/>
    <property type="match status" value="1"/>
</dbReference>
<dbReference type="Gene3D" id="2.30.30.30">
    <property type="match status" value="1"/>
</dbReference>
<dbReference type="HAMAP" id="MF_01326_B">
    <property type="entry name" value="Ribosomal_uL24_B"/>
    <property type="match status" value="1"/>
</dbReference>
<dbReference type="InterPro" id="IPR005824">
    <property type="entry name" value="KOW"/>
</dbReference>
<dbReference type="InterPro" id="IPR014722">
    <property type="entry name" value="Rib_uL2_dom2"/>
</dbReference>
<dbReference type="InterPro" id="IPR003256">
    <property type="entry name" value="Ribosomal_uL24"/>
</dbReference>
<dbReference type="InterPro" id="IPR005825">
    <property type="entry name" value="Ribosomal_uL24_CS"/>
</dbReference>
<dbReference type="InterPro" id="IPR041988">
    <property type="entry name" value="Ribosomal_uL24_KOW"/>
</dbReference>
<dbReference type="InterPro" id="IPR008991">
    <property type="entry name" value="Translation_prot_SH3-like_sf"/>
</dbReference>
<dbReference type="NCBIfam" id="TIGR01079">
    <property type="entry name" value="rplX_bact"/>
    <property type="match status" value="1"/>
</dbReference>
<dbReference type="PANTHER" id="PTHR12903">
    <property type="entry name" value="MITOCHONDRIAL RIBOSOMAL PROTEIN L24"/>
    <property type="match status" value="1"/>
</dbReference>
<dbReference type="Pfam" id="PF00467">
    <property type="entry name" value="KOW"/>
    <property type="match status" value="1"/>
</dbReference>
<dbReference type="Pfam" id="PF17136">
    <property type="entry name" value="ribosomal_L24"/>
    <property type="match status" value="1"/>
</dbReference>
<dbReference type="SMART" id="SM00739">
    <property type="entry name" value="KOW"/>
    <property type="match status" value="1"/>
</dbReference>
<dbReference type="SUPFAM" id="SSF50104">
    <property type="entry name" value="Translation proteins SH3-like domain"/>
    <property type="match status" value="1"/>
</dbReference>
<dbReference type="PROSITE" id="PS01108">
    <property type="entry name" value="RIBOSOMAL_L24"/>
    <property type="match status" value="1"/>
</dbReference>
<feature type="chain" id="PRO_1000052330" description="Large ribosomal subunit protein uL24">
    <location>
        <begin position="1"/>
        <end position="113"/>
    </location>
</feature>
<reference key="1">
    <citation type="submission" date="2006-05" db="EMBL/GenBank/DDBJ databases">
        <authorList>
            <consortium name="Genoscope"/>
        </authorList>
    </citation>
    <scope>NUCLEOTIDE SEQUENCE [LARGE SCALE GENOMIC DNA]</scope>
    <source>
        <strain>RCC307</strain>
    </source>
</reference>